<evidence type="ECO:0000255" key="1"/>
<evidence type="ECO:0000305" key="2"/>
<evidence type="ECO:0000305" key="3">
    <source>
    </source>
</evidence>
<accession>Q96HV5</accession>
<accession>A8K4B3</accession>
<accession>D3DNU2</accession>
<accession>Q6ZMJ0</accession>
<proteinExistence type="evidence at protein level"/>
<organism>
    <name type="scientific">Homo sapiens</name>
    <name type="common">Human</name>
    <dbReference type="NCBI Taxonomy" id="9606"/>
    <lineage>
        <taxon>Eukaryota</taxon>
        <taxon>Metazoa</taxon>
        <taxon>Chordata</taxon>
        <taxon>Craniata</taxon>
        <taxon>Vertebrata</taxon>
        <taxon>Euteleostomi</taxon>
        <taxon>Mammalia</taxon>
        <taxon>Eutheria</taxon>
        <taxon>Euarchontoglires</taxon>
        <taxon>Primates</taxon>
        <taxon>Haplorrhini</taxon>
        <taxon>Catarrhini</taxon>
        <taxon>Hominidae</taxon>
        <taxon>Homo</taxon>
    </lineage>
</organism>
<keyword id="KW-0325">Glycoprotein</keyword>
<keyword id="KW-0472">Membrane</keyword>
<keyword id="KW-1267">Proteomics identification</keyword>
<keyword id="KW-1185">Reference proteome</keyword>
<keyword id="KW-0732">Signal</keyword>
<keyword id="KW-0812">Transmembrane</keyword>
<keyword id="KW-1133">Transmembrane helix</keyword>
<protein>
    <recommendedName>
        <fullName>Transmembrane protein 41A</fullName>
    </recommendedName>
</protein>
<sequence>MRPLLGLLLVFAGCTFALYLLSTRLPRGRRLGSTEEAGGRSLWFPSDLAELRELSEVLREYRKEHQAYVFLLFCGAYLYKQGFAIPGSSFLNVLAGALFGPWLGLLLCCVLTSVGATCCYLLSSIFGKQLVVSYFPDKVALLQRKVEENRNSLFFFLLFLRLFPMTPNWFLNLSAPILNIPIVQFFFSVLIGLIPYNFICVQTGSILSTLTSLDALFSWDTVFKLLAIAMVALIPGTLIKKFSQKHLQLNETSTANHIHSRKDT</sequence>
<reference key="1">
    <citation type="journal article" date="2003" name="Genome Res.">
        <title>The secreted protein discovery initiative (SPDI), a large-scale effort to identify novel human secreted and transmembrane proteins: a bioinformatics assessment.</title>
        <authorList>
            <person name="Clark H.F."/>
            <person name="Gurney A.L."/>
            <person name="Abaya E."/>
            <person name="Baker K."/>
            <person name="Baldwin D.T."/>
            <person name="Brush J."/>
            <person name="Chen J."/>
            <person name="Chow B."/>
            <person name="Chui C."/>
            <person name="Crowley C."/>
            <person name="Currell B."/>
            <person name="Deuel B."/>
            <person name="Dowd P."/>
            <person name="Eaton D."/>
            <person name="Foster J.S."/>
            <person name="Grimaldi C."/>
            <person name="Gu Q."/>
            <person name="Hass P.E."/>
            <person name="Heldens S."/>
            <person name="Huang A."/>
            <person name="Kim H.S."/>
            <person name="Klimowski L."/>
            <person name="Jin Y."/>
            <person name="Johnson S."/>
            <person name="Lee J."/>
            <person name="Lewis L."/>
            <person name="Liao D."/>
            <person name="Mark M.R."/>
            <person name="Robbie E."/>
            <person name="Sanchez C."/>
            <person name="Schoenfeld J."/>
            <person name="Seshagiri S."/>
            <person name="Simmons L."/>
            <person name="Singh J."/>
            <person name="Smith V."/>
            <person name="Stinson J."/>
            <person name="Vagts A."/>
            <person name="Vandlen R.L."/>
            <person name="Watanabe C."/>
            <person name="Wieand D."/>
            <person name="Woods K."/>
            <person name="Xie M.-H."/>
            <person name="Yansura D.G."/>
            <person name="Yi S."/>
            <person name="Yu G."/>
            <person name="Yuan J."/>
            <person name="Zhang M."/>
            <person name="Zhang Z."/>
            <person name="Goddard A.D."/>
            <person name="Wood W.I."/>
            <person name="Godowski P.J."/>
            <person name="Gray A.M."/>
        </authorList>
    </citation>
    <scope>NUCLEOTIDE SEQUENCE [LARGE SCALE MRNA]</scope>
</reference>
<reference key="2">
    <citation type="journal article" date="2004" name="Nat. Genet.">
        <title>Complete sequencing and characterization of 21,243 full-length human cDNAs.</title>
        <authorList>
            <person name="Ota T."/>
            <person name="Suzuki Y."/>
            <person name="Nishikawa T."/>
            <person name="Otsuki T."/>
            <person name="Sugiyama T."/>
            <person name="Irie R."/>
            <person name="Wakamatsu A."/>
            <person name="Hayashi K."/>
            <person name="Sato H."/>
            <person name="Nagai K."/>
            <person name="Kimura K."/>
            <person name="Makita H."/>
            <person name="Sekine M."/>
            <person name="Obayashi M."/>
            <person name="Nishi T."/>
            <person name="Shibahara T."/>
            <person name="Tanaka T."/>
            <person name="Ishii S."/>
            <person name="Yamamoto J."/>
            <person name="Saito K."/>
            <person name="Kawai Y."/>
            <person name="Isono Y."/>
            <person name="Nakamura Y."/>
            <person name="Nagahari K."/>
            <person name="Murakami K."/>
            <person name="Yasuda T."/>
            <person name="Iwayanagi T."/>
            <person name="Wagatsuma M."/>
            <person name="Shiratori A."/>
            <person name="Sudo H."/>
            <person name="Hosoiri T."/>
            <person name="Kaku Y."/>
            <person name="Kodaira H."/>
            <person name="Kondo H."/>
            <person name="Sugawara M."/>
            <person name="Takahashi M."/>
            <person name="Kanda K."/>
            <person name="Yokoi T."/>
            <person name="Furuya T."/>
            <person name="Kikkawa E."/>
            <person name="Omura Y."/>
            <person name="Abe K."/>
            <person name="Kamihara K."/>
            <person name="Katsuta N."/>
            <person name="Sato K."/>
            <person name="Tanikawa M."/>
            <person name="Yamazaki M."/>
            <person name="Ninomiya K."/>
            <person name="Ishibashi T."/>
            <person name="Yamashita H."/>
            <person name="Murakawa K."/>
            <person name="Fujimori K."/>
            <person name="Tanai H."/>
            <person name="Kimata M."/>
            <person name="Watanabe M."/>
            <person name="Hiraoka S."/>
            <person name="Chiba Y."/>
            <person name="Ishida S."/>
            <person name="Ono Y."/>
            <person name="Takiguchi S."/>
            <person name="Watanabe S."/>
            <person name="Yosida M."/>
            <person name="Hotuta T."/>
            <person name="Kusano J."/>
            <person name="Kanehori K."/>
            <person name="Takahashi-Fujii A."/>
            <person name="Hara H."/>
            <person name="Tanase T.-O."/>
            <person name="Nomura Y."/>
            <person name="Togiya S."/>
            <person name="Komai F."/>
            <person name="Hara R."/>
            <person name="Takeuchi K."/>
            <person name="Arita M."/>
            <person name="Imose N."/>
            <person name="Musashino K."/>
            <person name="Yuuki H."/>
            <person name="Oshima A."/>
            <person name="Sasaki N."/>
            <person name="Aotsuka S."/>
            <person name="Yoshikawa Y."/>
            <person name="Matsunawa H."/>
            <person name="Ichihara T."/>
            <person name="Shiohata N."/>
            <person name="Sano S."/>
            <person name="Moriya S."/>
            <person name="Momiyama H."/>
            <person name="Satoh N."/>
            <person name="Takami S."/>
            <person name="Terashima Y."/>
            <person name="Suzuki O."/>
            <person name="Nakagawa S."/>
            <person name="Senoh A."/>
            <person name="Mizoguchi H."/>
            <person name="Goto Y."/>
            <person name="Shimizu F."/>
            <person name="Wakebe H."/>
            <person name="Hishigaki H."/>
            <person name="Watanabe T."/>
            <person name="Sugiyama A."/>
            <person name="Takemoto M."/>
            <person name="Kawakami B."/>
            <person name="Yamazaki M."/>
            <person name="Watanabe K."/>
            <person name="Kumagai A."/>
            <person name="Itakura S."/>
            <person name="Fukuzumi Y."/>
            <person name="Fujimori Y."/>
            <person name="Komiyama M."/>
            <person name="Tashiro H."/>
            <person name="Tanigami A."/>
            <person name="Fujiwara T."/>
            <person name="Ono T."/>
            <person name="Yamada K."/>
            <person name="Fujii Y."/>
            <person name="Ozaki K."/>
            <person name="Hirao M."/>
            <person name="Ohmori Y."/>
            <person name="Kawabata A."/>
            <person name="Hikiji T."/>
            <person name="Kobatake N."/>
            <person name="Inagaki H."/>
            <person name="Ikema Y."/>
            <person name="Okamoto S."/>
            <person name="Okitani R."/>
            <person name="Kawakami T."/>
            <person name="Noguchi S."/>
            <person name="Itoh T."/>
            <person name="Shigeta K."/>
            <person name="Senba T."/>
            <person name="Matsumura K."/>
            <person name="Nakajima Y."/>
            <person name="Mizuno T."/>
            <person name="Morinaga M."/>
            <person name="Sasaki M."/>
            <person name="Togashi T."/>
            <person name="Oyama M."/>
            <person name="Hata H."/>
            <person name="Watanabe M."/>
            <person name="Komatsu T."/>
            <person name="Mizushima-Sugano J."/>
            <person name="Satoh T."/>
            <person name="Shirai Y."/>
            <person name="Takahashi Y."/>
            <person name="Nakagawa K."/>
            <person name="Okumura K."/>
            <person name="Nagase T."/>
            <person name="Nomura N."/>
            <person name="Kikuchi H."/>
            <person name="Masuho Y."/>
            <person name="Yamashita R."/>
            <person name="Nakai K."/>
            <person name="Yada T."/>
            <person name="Nakamura Y."/>
            <person name="Ohara O."/>
            <person name="Isogai T."/>
            <person name="Sugano S."/>
        </authorList>
    </citation>
    <scope>NUCLEOTIDE SEQUENCE [LARGE SCALE MRNA]</scope>
    <source>
        <tissue>Adipose tissue</tissue>
    </source>
</reference>
<reference key="3">
    <citation type="submission" date="2005-09" db="EMBL/GenBank/DDBJ databases">
        <authorList>
            <person name="Mural R.J."/>
            <person name="Istrail S."/>
            <person name="Sutton G.G."/>
            <person name="Florea L."/>
            <person name="Halpern A.L."/>
            <person name="Mobarry C.M."/>
            <person name="Lippert R."/>
            <person name="Walenz B."/>
            <person name="Shatkay H."/>
            <person name="Dew I."/>
            <person name="Miller J.R."/>
            <person name="Flanigan M.J."/>
            <person name="Edwards N.J."/>
            <person name="Bolanos R."/>
            <person name="Fasulo D."/>
            <person name="Halldorsson B.V."/>
            <person name="Hannenhalli S."/>
            <person name="Turner R."/>
            <person name="Yooseph S."/>
            <person name="Lu F."/>
            <person name="Nusskern D.R."/>
            <person name="Shue B.C."/>
            <person name="Zheng X.H."/>
            <person name="Zhong F."/>
            <person name="Delcher A.L."/>
            <person name="Huson D.H."/>
            <person name="Kravitz S.A."/>
            <person name="Mouchard L."/>
            <person name="Reinert K."/>
            <person name="Remington K.A."/>
            <person name="Clark A.G."/>
            <person name="Waterman M.S."/>
            <person name="Eichler E.E."/>
            <person name="Adams M.D."/>
            <person name="Hunkapiller M.W."/>
            <person name="Myers E.W."/>
            <person name="Venter J.C."/>
        </authorList>
    </citation>
    <scope>NUCLEOTIDE SEQUENCE [LARGE SCALE GENOMIC DNA]</scope>
</reference>
<reference key="4">
    <citation type="journal article" date="2004" name="Genome Res.">
        <title>The status, quality, and expansion of the NIH full-length cDNA project: the Mammalian Gene Collection (MGC).</title>
        <authorList>
            <consortium name="The MGC Project Team"/>
        </authorList>
    </citation>
    <scope>NUCLEOTIDE SEQUENCE [LARGE SCALE MRNA]</scope>
    <source>
        <tissue>Ovary</tissue>
        <tissue>Placenta</tissue>
    </source>
</reference>
<reference key="5">
    <citation type="journal article" date="2018" name="J. Cell Biol.">
        <title>Genome-wide CRISPR screen identifies TMEM41B as a gene required for autophagosome formation.</title>
        <authorList>
            <person name="Morita K."/>
            <person name="Hama Y."/>
            <person name="Izume T."/>
            <person name="Tamura N."/>
            <person name="Ueno T."/>
            <person name="Yamashita Y."/>
            <person name="Sakamaki Y."/>
            <person name="Mimura K."/>
            <person name="Morishita H."/>
            <person name="Shihoya W."/>
            <person name="Nureki O."/>
            <person name="Mano H."/>
            <person name="Mizushima N."/>
        </authorList>
    </citation>
    <scope>REGION VTT DOMAIN</scope>
</reference>
<feature type="signal peptide" evidence="1">
    <location>
        <begin position="1"/>
        <end position="17"/>
    </location>
</feature>
<feature type="chain" id="PRO_0000271775" description="Transmembrane protein 41A">
    <location>
        <begin position="18"/>
        <end position="264"/>
    </location>
</feature>
<feature type="transmembrane region" description="Helical" evidence="1">
    <location>
        <begin position="67"/>
        <end position="87"/>
    </location>
</feature>
<feature type="transmembrane region" description="Helical" evidence="1">
    <location>
        <begin position="100"/>
        <end position="122"/>
    </location>
</feature>
<feature type="transmembrane region" description="Helical" evidence="1">
    <location>
        <begin position="153"/>
        <end position="173"/>
    </location>
</feature>
<feature type="transmembrane region" description="Helical" evidence="1">
    <location>
        <begin position="175"/>
        <end position="195"/>
    </location>
</feature>
<feature type="transmembrane region" description="Helical" evidence="1">
    <location>
        <begin position="219"/>
        <end position="239"/>
    </location>
</feature>
<feature type="region of interest" description="VTT domain" evidence="3">
    <location>
        <begin position="96"/>
        <end position="207"/>
    </location>
</feature>
<feature type="glycosylation site" description="N-linked (GlcNAc...) asparagine" evidence="1">
    <location>
        <position position="250"/>
    </location>
</feature>
<name>TM41A_HUMAN</name>
<comment type="interaction">
    <interactant intactId="EBI-10288884">
        <id>Q96HV5</id>
    </interactant>
    <interactant intactId="EBI-1058710">
        <id>O43169</id>
        <label>CYB5B</label>
    </interactant>
    <organismsDiffer>false</organismsDiffer>
    <experiments>3</experiments>
</comment>
<comment type="interaction">
    <interactant intactId="EBI-10288884">
        <id>Q96HV5</id>
    </interactant>
    <interactant intactId="EBI-11337888">
        <id>Q7L5A8</id>
        <label>FA2H</label>
    </interactant>
    <organismsDiffer>false</organismsDiffer>
    <experiments>3</experiments>
</comment>
<comment type="interaction">
    <interactant intactId="EBI-10288884">
        <id>Q96HV5</id>
    </interactant>
    <interactant intactId="EBI-749265">
        <id>Q8N6L0</id>
        <label>KASH5</label>
    </interactant>
    <organismsDiffer>false</organismsDiffer>
    <experiments>3</experiments>
</comment>
<comment type="interaction">
    <interactant intactId="EBI-10288884">
        <id>Q96HV5</id>
    </interactant>
    <interactant intactId="EBI-12033434">
        <id>Q9UBY5</id>
        <label>LPAR3</label>
    </interactant>
    <organismsDiffer>false</organismsDiffer>
    <experiments>3</experiments>
</comment>
<comment type="interaction">
    <interactant intactId="EBI-10288884">
        <id>Q96HV5</id>
    </interactant>
    <interactant intactId="EBI-945833">
        <id>Q7Z3S9</id>
        <label>NOTCH2NLA</label>
    </interactant>
    <organismsDiffer>false</organismsDiffer>
    <experiments>3</experiments>
</comment>
<comment type="interaction">
    <interactant intactId="EBI-10288884">
        <id>Q96HV5</id>
    </interactant>
    <interactant intactId="EBI-968788">
        <id>P18031</id>
        <label>PTPN1</label>
    </interactant>
    <organismsDiffer>false</organismsDiffer>
    <experiments>3</experiments>
</comment>
<comment type="interaction">
    <interactant intactId="EBI-10288884">
        <id>Q96HV5</id>
    </interactant>
    <interactant intactId="EBI-712466">
        <id>Q16623</id>
        <label>STX1A</label>
    </interactant>
    <organismsDiffer>false</organismsDiffer>
    <experiments>3</experiments>
</comment>
<comment type="subcellular location">
    <subcellularLocation>
        <location evidence="2">Membrane</location>
        <topology evidence="2">Multi-pass membrane protein</topology>
    </subcellularLocation>
</comment>
<comment type="domain">
    <text evidence="3">The VTT domain was previously called the SNARE-assoc domain. As there is no evidence that this domain associates with SNARE proteins, it was renamed as VMP1, TMEM41, and TVP38 (VTT) domain.</text>
</comment>
<comment type="similarity">
    <text evidence="2">Belongs to the TMEM41 family.</text>
</comment>
<comment type="sequence caution" evidence="2">
    <conflict type="miscellaneous discrepancy">
        <sequence resource="EMBL-CDS" id="BAD18735"/>
    </conflict>
    <text>Unlikely isoform. Aberrant splice sites.</text>
</comment>
<gene>
    <name type="primary">TMEM41A</name>
    <name type="ORF">UNQ168/PRO194</name>
</gene>
<dbReference type="EMBL" id="AY358547">
    <property type="protein sequence ID" value="AAQ88911.1"/>
    <property type="molecule type" value="mRNA"/>
</dbReference>
<dbReference type="EMBL" id="AK172748">
    <property type="protein sequence ID" value="BAD18735.1"/>
    <property type="status" value="ALT_SEQ"/>
    <property type="molecule type" value="mRNA"/>
</dbReference>
<dbReference type="EMBL" id="AK290878">
    <property type="protein sequence ID" value="BAF83567.1"/>
    <property type="molecule type" value="mRNA"/>
</dbReference>
<dbReference type="EMBL" id="CH471052">
    <property type="protein sequence ID" value="EAW78219.1"/>
    <property type="molecule type" value="Genomic_DNA"/>
</dbReference>
<dbReference type="EMBL" id="CH471052">
    <property type="protein sequence ID" value="EAW78223.1"/>
    <property type="molecule type" value="Genomic_DNA"/>
</dbReference>
<dbReference type="EMBL" id="BC008043">
    <property type="protein sequence ID" value="AAH08043.1"/>
    <property type="molecule type" value="mRNA"/>
</dbReference>
<dbReference type="EMBL" id="BC019884">
    <property type="protein sequence ID" value="AAH19884.1"/>
    <property type="molecule type" value="mRNA"/>
</dbReference>
<dbReference type="CCDS" id="CCDS3271.1"/>
<dbReference type="RefSeq" id="NP_542383.1">
    <property type="nucleotide sequence ID" value="NM_080652.4"/>
</dbReference>
<dbReference type="BioGRID" id="124709">
    <property type="interactions" value="24"/>
</dbReference>
<dbReference type="FunCoup" id="Q96HV5">
    <property type="interactions" value="234"/>
</dbReference>
<dbReference type="IntAct" id="Q96HV5">
    <property type="interactions" value="13"/>
</dbReference>
<dbReference type="MINT" id="Q96HV5"/>
<dbReference type="STRING" id="9606.ENSP00000406885"/>
<dbReference type="TCDB" id="9.B.27.1.9">
    <property type="family name" value="the death effector domain a (deda) family"/>
</dbReference>
<dbReference type="GlyCosmos" id="Q96HV5">
    <property type="glycosylation" value="1 site, No reported glycans"/>
</dbReference>
<dbReference type="GlyGen" id="Q96HV5">
    <property type="glycosylation" value="1 site, 1 N-linked glycan (1 site)"/>
</dbReference>
<dbReference type="iPTMnet" id="Q96HV5"/>
<dbReference type="PhosphoSitePlus" id="Q96HV5"/>
<dbReference type="SwissPalm" id="Q96HV5"/>
<dbReference type="BioMuta" id="TMEM41A"/>
<dbReference type="DMDM" id="74731986"/>
<dbReference type="jPOST" id="Q96HV5"/>
<dbReference type="MassIVE" id="Q96HV5"/>
<dbReference type="PaxDb" id="9606-ENSP00000406885"/>
<dbReference type="PeptideAtlas" id="Q96HV5"/>
<dbReference type="ProteomicsDB" id="76788"/>
<dbReference type="Pumba" id="Q96HV5"/>
<dbReference type="Antibodypedia" id="46836">
    <property type="antibodies" value="66 antibodies from 14 providers"/>
</dbReference>
<dbReference type="DNASU" id="90407"/>
<dbReference type="Ensembl" id="ENST00000421852.6">
    <property type="protein sequence ID" value="ENSP00000406885.1"/>
    <property type="gene ID" value="ENSG00000163900.11"/>
</dbReference>
<dbReference type="GeneID" id="90407"/>
<dbReference type="KEGG" id="hsa:90407"/>
<dbReference type="MANE-Select" id="ENST00000421852.6">
    <property type="protein sequence ID" value="ENSP00000406885.1"/>
    <property type="RefSeq nucleotide sequence ID" value="NM_080652.4"/>
    <property type="RefSeq protein sequence ID" value="NP_542383.1"/>
</dbReference>
<dbReference type="UCSC" id="uc003fpj.2">
    <property type="organism name" value="human"/>
</dbReference>
<dbReference type="AGR" id="HGNC:30544"/>
<dbReference type="CTD" id="90407"/>
<dbReference type="DisGeNET" id="90407"/>
<dbReference type="GeneCards" id="TMEM41A"/>
<dbReference type="HGNC" id="HGNC:30544">
    <property type="gene designation" value="TMEM41A"/>
</dbReference>
<dbReference type="HPA" id="ENSG00000163900">
    <property type="expression patterns" value="Low tissue specificity"/>
</dbReference>
<dbReference type="neXtProt" id="NX_Q96HV5"/>
<dbReference type="OpenTargets" id="ENSG00000163900"/>
<dbReference type="PharmGKB" id="PA134873545"/>
<dbReference type="VEuPathDB" id="HostDB:ENSG00000163900"/>
<dbReference type="eggNOG" id="KOG3140">
    <property type="taxonomic scope" value="Eukaryota"/>
</dbReference>
<dbReference type="GeneTree" id="ENSGT00940000162528"/>
<dbReference type="HOGENOM" id="CLU_038944_0_2_1"/>
<dbReference type="InParanoid" id="Q96HV5"/>
<dbReference type="OMA" id="WWMTGTG"/>
<dbReference type="OrthoDB" id="3364966at2759"/>
<dbReference type="PAN-GO" id="Q96HV5">
    <property type="GO annotations" value="0 GO annotations based on evolutionary models"/>
</dbReference>
<dbReference type="PhylomeDB" id="Q96HV5"/>
<dbReference type="TreeFam" id="TF314301"/>
<dbReference type="PathwayCommons" id="Q96HV5"/>
<dbReference type="SignaLink" id="Q96HV5"/>
<dbReference type="BioGRID-ORCS" id="90407">
    <property type="hits" value="42 hits in 1160 CRISPR screens"/>
</dbReference>
<dbReference type="ChiTaRS" id="TMEM41A">
    <property type="organism name" value="human"/>
</dbReference>
<dbReference type="GenomeRNAi" id="90407"/>
<dbReference type="Pharos" id="Q96HV5">
    <property type="development level" value="Tdark"/>
</dbReference>
<dbReference type="PRO" id="PR:Q96HV5"/>
<dbReference type="Proteomes" id="UP000005640">
    <property type="component" value="Chromosome 3"/>
</dbReference>
<dbReference type="RNAct" id="Q96HV5">
    <property type="molecule type" value="protein"/>
</dbReference>
<dbReference type="Bgee" id="ENSG00000163900">
    <property type="expression patterns" value="Expressed in oocyte and 181 other cell types or tissues"/>
</dbReference>
<dbReference type="ExpressionAtlas" id="Q96HV5">
    <property type="expression patterns" value="baseline and differential"/>
</dbReference>
<dbReference type="GO" id="GO:0016020">
    <property type="term" value="C:membrane"/>
    <property type="evidence" value="ECO:0007669"/>
    <property type="project" value="UniProtKB-SubCell"/>
</dbReference>
<dbReference type="InterPro" id="IPR045014">
    <property type="entry name" value="TM41A/B"/>
</dbReference>
<dbReference type="InterPro" id="IPR032816">
    <property type="entry name" value="VTT_dom"/>
</dbReference>
<dbReference type="PANTHER" id="PTHR43220">
    <property type="match status" value="1"/>
</dbReference>
<dbReference type="PANTHER" id="PTHR43220:SF21">
    <property type="entry name" value="TRANSMEMBRANE PROTEIN 41A"/>
    <property type="match status" value="1"/>
</dbReference>
<dbReference type="Pfam" id="PF09335">
    <property type="entry name" value="VTT_dom"/>
    <property type="match status" value="1"/>
</dbReference>